<reference key="1">
    <citation type="journal article" date="2001" name="J. Cell Sci.">
        <title>Uroplakin Ia is the urothelial receptor for uropathogenic Escherichia coli: evidence from in vitro FimH binding.</title>
        <authorList>
            <person name="Zhou G."/>
            <person name="Mo W.J."/>
            <person name="Sebbel P."/>
            <person name="Min G."/>
            <person name="Neubert T.A."/>
            <person name="Glockshuber R."/>
            <person name="Wu X.R."/>
            <person name="Sun T.T."/>
            <person name="Kong X.P."/>
        </authorList>
    </citation>
    <scope>NUCLEOTIDE SEQUENCE [MRNA]</scope>
    <scope>INTERACTION WITH E.COLI FIMH</scope>
    <source>
        <tissue>Urinary bladder</tissue>
    </source>
</reference>
<reference key="2">
    <citation type="journal article" date="2005" name="Science">
        <title>The transcriptional landscape of the mammalian genome.</title>
        <authorList>
            <person name="Carninci P."/>
            <person name="Kasukawa T."/>
            <person name="Katayama S."/>
            <person name="Gough J."/>
            <person name="Frith M.C."/>
            <person name="Maeda N."/>
            <person name="Oyama R."/>
            <person name="Ravasi T."/>
            <person name="Lenhard B."/>
            <person name="Wells C."/>
            <person name="Kodzius R."/>
            <person name="Shimokawa K."/>
            <person name="Bajic V.B."/>
            <person name="Brenner S.E."/>
            <person name="Batalov S."/>
            <person name="Forrest A.R."/>
            <person name="Zavolan M."/>
            <person name="Davis M.J."/>
            <person name="Wilming L.G."/>
            <person name="Aidinis V."/>
            <person name="Allen J.E."/>
            <person name="Ambesi-Impiombato A."/>
            <person name="Apweiler R."/>
            <person name="Aturaliya R.N."/>
            <person name="Bailey T.L."/>
            <person name="Bansal M."/>
            <person name="Baxter L."/>
            <person name="Beisel K.W."/>
            <person name="Bersano T."/>
            <person name="Bono H."/>
            <person name="Chalk A.M."/>
            <person name="Chiu K.P."/>
            <person name="Choudhary V."/>
            <person name="Christoffels A."/>
            <person name="Clutterbuck D.R."/>
            <person name="Crowe M.L."/>
            <person name="Dalla E."/>
            <person name="Dalrymple B.P."/>
            <person name="de Bono B."/>
            <person name="Della Gatta G."/>
            <person name="di Bernardo D."/>
            <person name="Down T."/>
            <person name="Engstrom P."/>
            <person name="Fagiolini M."/>
            <person name="Faulkner G."/>
            <person name="Fletcher C.F."/>
            <person name="Fukushima T."/>
            <person name="Furuno M."/>
            <person name="Futaki S."/>
            <person name="Gariboldi M."/>
            <person name="Georgii-Hemming P."/>
            <person name="Gingeras T.R."/>
            <person name="Gojobori T."/>
            <person name="Green R.E."/>
            <person name="Gustincich S."/>
            <person name="Harbers M."/>
            <person name="Hayashi Y."/>
            <person name="Hensch T.K."/>
            <person name="Hirokawa N."/>
            <person name="Hill D."/>
            <person name="Huminiecki L."/>
            <person name="Iacono M."/>
            <person name="Ikeo K."/>
            <person name="Iwama A."/>
            <person name="Ishikawa T."/>
            <person name="Jakt M."/>
            <person name="Kanapin A."/>
            <person name="Katoh M."/>
            <person name="Kawasawa Y."/>
            <person name="Kelso J."/>
            <person name="Kitamura H."/>
            <person name="Kitano H."/>
            <person name="Kollias G."/>
            <person name="Krishnan S.P."/>
            <person name="Kruger A."/>
            <person name="Kummerfeld S.K."/>
            <person name="Kurochkin I.V."/>
            <person name="Lareau L.F."/>
            <person name="Lazarevic D."/>
            <person name="Lipovich L."/>
            <person name="Liu J."/>
            <person name="Liuni S."/>
            <person name="McWilliam S."/>
            <person name="Madan Babu M."/>
            <person name="Madera M."/>
            <person name="Marchionni L."/>
            <person name="Matsuda H."/>
            <person name="Matsuzawa S."/>
            <person name="Miki H."/>
            <person name="Mignone F."/>
            <person name="Miyake S."/>
            <person name="Morris K."/>
            <person name="Mottagui-Tabar S."/>
            <person name="Mulder N."/>
            <person name="Nakano N."/>
            <person name="Nakauchi H."/>
            <person name="Ng P."/>
            <person name="Nilsson R."/>
            <person name="Nishiguchi S."/>
            <person name="Nishikawa S."/>
            <person name="Nori F."/>
            <person name="Ohara O."/>
            <person name="Okazaki Y."/>
            <person name="Orlando V."/>
            <person name="Pang K.C."/>
            <person name="Pavan W.J."/>
            <person name="Pavesi G."/>
            <person name="Pesole G."/>
            <person name="Petrovsky N."/>
            <person name="Piazza S."/>
            <person name="Reed J."/>
            <person name="Reid J.F."/>
            <person name="Ring B.Z."/>
            <person name="Ringwald M."/>
            <person name="Rost B."/>
            <person name="Ruan Y."/>
            <person name="Salzberg S.L."/>
            <person name="Sandelin A."/>
            <person name="Schneider C."/>
            <person name="Schoenbach C."/>
            <person name="Sekiguchi K."/>
            <person name="Semple C.A."/>
            <person name="Seno S."/>
            <person name="Sessa L."/>
            <person name="Sheng Y."/>
            <person name="Shibata Y."/>
            <person name="Shimada H."/>
            <person name="Shimada K."/>
            <person name="Silva D."/>
            <person name="Sinclair B."/>
            <person name="Sperling S."/>
            <person name="Stupka E."/>
            <person name="Sugiura K."/>
            <person name="Sultana R."/>
            <person name="Takenaka Y."/>
            <person name="Taki K."/>
            <person name="Tammoja K."/>
            <person name="Tan S.L."/>
            <person name="Tang S."/>
            <person name="Taylor M.S."/>
            <person name="Tegner J."/>
            <person name="Teichmann S.A."/>
            <person name="Ueda H.R."/>
            <person name="van Nimwegen E."/>
            <person name="Verardo R."/>
            <person name="Wei C.L."/>
            <person name="Yagi K."/>
            <person name="Yamanishi H."/>
            <person name="Zabarovsky E."/>
            <person name="Zhu S."/>
            <person name="Zimmer A."/>
            <person name="Hide W."/>
            <person name="Bult C."/>
            <person name="Grimmond S.M."/>
            <person name="Teasdale R.D."/>
            <person name="Liu E.T."/>
            <person name="Brusic V."/>
            <person name="Quackenbush J."/>
            <person name="Wahlestedt C."/>
            <person name="Mattick J.S."/>
            <person name="Hume D.A."/>
            <person name="Kai C."/>
            <person name="Sasaki D."/>
            <person name="Tomaru Y."/>
            <person name="Fukuda S."/>
            <person name="Kanamori-Katayama M."/>
            <person name="Suzuki M."/>
            <person name="Aoki J."/>
            <person name="Arakawa T."/>
            <person name="Iida J."/>
            <person name="Imamura K."/>
            <person name="Itoh M."/>
            <person name="Kato T."/>
            <person name="Kawaji H."/>
            <person name="Kawagashira N."/>
            <person name="Kawashima T."/>
            <person name="Kojima M."/>
            <person name="Kondo S."/>
            <person name="Konno H."/>
            <person name="Nakano K."/>
            <person name="Ninomiya N."/>
            <person name="Nishio T."/>
            <person name="Okada M."/>
            <person name="Plessy C."/>
            <person name="Shibata K."/>
            <person name="Shiraki T."/>
            <person name="Suzuki S."/>
            <person name="Tagami M."/>
            <person name="Waki K."/>
            <person name="Watahiki A."/>
            <person name="Okamura-Oho Y."/>
            <person name="Suzuki H."/>
            <person name="Kawai J."/>
            <person name="Hayashizaki Y."/>
        </authorList>
    </citation>
    <scope>NUCLEOTIDE SEQUENCE [LARGE SCALE MRNA]</scope>
    <source>
        <strain>C57BL/6J</strain>
    </source>
</reference>
<feature type="chain" id="PRO_0000219287" description="Uroplakin-1a">
    <location>
        <begin position="1"/>
        <end position="257"/>
    </location>
</feature>
<feature type="topological domain" description="Cytoplasmic" evidence="2">
    <location>
        <begin position="1"/>
        <end position="13"/>
    </location>
</feature>
<feature type="transmembrane region" description="Helical" evidence="2">
    <location>
        <begin position="14"/>
        <end position="34"/>
    </location>
</feature>
<feature type="topological domain" description="Extracellular" evidence="2">
    <location>
        <begin position="35"/>
        <end position="58"/>
    </location>
</feature>
<feature type="transmembrane region" description="Helical" evidence="2">
    <location>
        <begin position="59"/>
        <end position="85"/>
    </location>
</feature>
<feature type="topological domain" description="Cytoplasmic" evidence="2">
    <location>
        <begin position="86"/>
        <end position="90"/>
    </location>
</feature>
<feature type="transmembrane region" description="Helical" evidence="2">
    <location>
        <begin position="91"/>
        <end position="111"/>
    </location>
</feature>
<feature type="topological domain" description="Extracellular" evidence="2">
    <location>
        <begin position="112"/>
        <end position="229"/>
    </location>
</feature>
<feature type="transmembrane region" description="Helical" evidence="2">
    <location>
        <begin position="230"/>
        <end position="251"/>
    </location>
</feature>
<feature type="topological domain" description="Cytoplasmic" evidence="2">
    <location>
        <begin position="252"/>
        <end position="257"/>
    </location>
</feature>
<feature type="glycosylation site" description="N-linked (GlcNAc...) asparagine" evidence="2">
    <location>
        <position position="169"/>
    </location>
</feature>
<proteinExistence type="evidence at protein level"/>
<sequence>MASAATEGEKGSPVVVGLLVVGNIIILLSGLALFAETVWVTADQYRVYPLMGVSGKDDVFAGAWIAIFCGFSFFVVASFGVGAALCRRRYMILTYLLLMLIVYIFECASCITSYTHRDYMVSNPSLITKQMLTYYSADTDQGQELTRLWDRIMIEQECCGTSGPMDWVNYTSAFRAATPEVVFPWPPLCCRRTGNFIPINEDGCRVGHMDYLFTKGCFEHIGHAIDSYTWGISWFGFAILMWTLPVMLIAMYFYTTL</sequence>
<name>UPK1A_MOUSE</name>
<protein>
    <recommendedName>
        <fullName>Uroplakin-1a</fullName>
        <shortName>UP1a</shortName>
    </recommendedName>
    <alternativeName>
        <fullName>Uroplakin Ia</fullName>
        <shortName>UPIa</shortName>
        <shortName>UPKa</shortName>
    </alternativeName>
</protein>
<dbReference type="EMBL" id="AF262335">
    <property type="protein sequence ID" value="AAM08129.1"/>
    <property type="molecule type" value="mRNA"/>
</dbReference>
<dbReference type="EMBL" id="AK004014">
    <property type="protein sequence ID" value="BAB23125.1"/>
    <property type="molecule type" value="mRNA"/>
</dbReference>
<dbReference type="CCDS" id="CCDS21103.1"/>
<dbReference type="RefSeq" id="NP_081091.1">
    <property type="nucleotide sequence ID" value="NM_026815.2"/>
</dbReference>
<dbReference type="SMR" id="Q9D132"/>
<dbReference type="FunCoup" id="Q9D132">
    <property type="interactions" value="7"/>
</dbReference>
<dbReference type="STRING" id="10090.ENSMUSP00000006476"/>
<dbReference type="GlyCosmos" id="Q9D132">
    <property type="glycosylation" value="1 site, No reported glycans"/>
</dbReference>
<dbReference type="GlyGen" id="Q9D132">
    <property type="glycosylation" value="1 site"/>
</dbReference>
<dbReference type="PhosphoSitePlus" id="Q9D132"/>
<dbReference type="PaxDb" id="10090-ENSMUSP00000006476"/>
<dbReference type="ProteomicsDB" id="297868"/>
<dbReference type="Antibodypedia" id="54114">
    <property type="antibodies" value="152 antibodies from 26 providers"/>
</dbReference>
<dbReference type="Ensembl" id="ENSMUST00000006476.6">
    <property type="protein sequence ID" value="ENSMUSP00000006476.5"/>
    <property type="gene ID" value="ENSMUSG00000006313.6"/>
</dbReference>
<dbReference type="GeneID" id="109637"/>
<dbReference type="KEGG" id="mmu:109637"/>
<dbReference type="UCSC" id="uc009gfk.2">
    <property type="organism name" value="mouse"/>
</dbReference>
<dbReference type="AGR" id="MGI:98911"/>
<dbReference type="CTD" id="11045"/>
<dbReference type="MGI" id="MGI:98911">
    <property type="gene designation" value="Upk1a"/>
</dbReference>
<dbReference type="VEuPathDB" id="HostDB:ENSMUSG00000006313"/>
<dbReference type="eggNOG" id="KOG3882">
    <property type="taxonomic scope" value="Eukaryota"/>
</dbReference>
<dbReference type="GeneTree" id="ENSGT00940000160881"/>
<dbReference type="HOGENOM" id="CLU_088971_1_0_1"/>
<dbReference type="InParanoid" id="Q9D132"/>
<dbReference type="OMA" id="VVYIFEC"/>
<dbReference type="OrthoDB" id="6361633at2759"/>
<dbReference type="PhylomeDB" id="Q9D132"/>
<dbReference type="TreeFam" id="TF335659"/>
<dbReference type="BioGRID-ORCS" id="109637">
    <property type="hits" value="2 hits in 79 CRISPR screens"/>
</dbReference>
<dbReference type="ChiTaRS" id="Upk1a">
    <property type="organism name" value="mouse"/>
</dbReference>
<dbReference type="PRO" id="PR:Q9D132"/>
<dbReference type="Proteomes" id="UP000000589">
    <property type="component" value="Chromosome 7"/>
</dbReference>
<dbReference type="RNAct" id="Q9D132">
    <property type="molecule type" value="protein"/>
</dbReference>
<dbReference type="Bgee" id="ENSMUSG00000006313">
    <property type="expression patterns" value="Expressed in urinary bladder urothelium and 99 other cell types or tissues"/>
</dbReference>
<dbReference type="ExpressionAtlas" id="Q9D132">
    <property type="expression patterns" value="baseline and differential"/>
</dbReference>
<dbReference type="GO" id="GO:0016324">
    <property type="term" value="C:apical plasma membrane"/>
    <property type="evidence" value="ECO:0000314"/>
    <property type="project" value="MGI"/>
</dbReference>
<dbReference type="GO" id="GO:0120001">
    <property type="term" value="C:apical plasma membrane urothelial plaque"/>
    <property type="evidence" value="ECO:0000314"/>
    <property type="project" value="MGI"/>
</dbReference>
<dbReference type="GO" id="GO:0009986">
    <property type="term" value="C:cell surface"/>
    <property type="evidence" value="ECO:0007669"/>
    <property type="project" value="Ensembl"/>
</dbReference>
<dbReference type="GO" id="GO:0005783">
    <property type="term" value="C:endoplasmic reticulum"/>
    <property type="evidence" value="ECO:0000250"/>
    <property type="project" value="UniProtKB"/>
</dbReference>
<dbReference type="GO" id="GO:0016020">
    <property type="term" value="C:membrane"/>
    <property type="evidence" value="ECO:0000314"/>
    <property type="project" value="UniProtKB"/>
</dbReference>
<dbReference type="GO" id="GO:0005886">
    <property type="term" value="C:plasma membrane"/>
    <property type="evidence" value="ECO:0000250"/>
    <property type="project" value="UniProtKB"/>
</dbReference>
<dbReference type="GO" id="GO:0032991">
    <property type="term" value="C:protein-containing complex"/>
    <property type="evidence" value="ECO:0000250"/>
    <property type="project" value="UniProtKB"/>
</dbReference>
<dbReference type="GO" id="GO:0030855">
    <property type="term" value="P:epithelial cell differentiation"/>
    <property type="evidence" value="ECO:0000250"/>
    <property type="project" value="UniProtKB"/>
</dbReference>
<dbReference type="CDD" id="cd03156">
    <property type="entry name" value="uroplakin_I_like_LEL"/>
    <property type="match status" value="1"/>
</dbReference>
<dbReference type="FunFam" id="1.10.1450.10:FF:000017">
    <property type="entry name" value="Tetraspanin"/>
    <property type="match status" value="1"/>
</dbReference>
<dbReference type="Gene3D" id="1.10.1450.10">
    <property type="entry name" value="Tetraspanin"/>
    <property type="match status" value="1"/>
</dbReference>
<dbReference type="InterPro" id="IPR018499">
    <property type="entry name" value="Tetraspanin/Peripherin"/>
</dbReference>
<dbReference type="InterPro" id="IPR000301">
    <property type="entry name" value="Tetraspanin_animals"/>
</dbReference>
<dbReference type="InterPro" id="IPR008952">
    <property type="entry name" value="Tetraspanin_EC2_sf"/>
</dbReference>
<dbReference type="PANTHER" id="PTHR47110">
    <property type="entry name" value="TESTIS-SPECIFIC EXPRESSED PROTEIN 55"/>
    <property type="match status" value="1"/>
</dbReference>
<dbReference type="PANTHER" id="PTHR47110:SF2">
    <property type="entry name" value="UROPLAKIN-1B"/>
    <property type="match status" value="1"/>
</dbReference>
<dbReference type="Pfam" id="PF00335">
    <property type="entry name" value="Tetraspanin"/>
    <property type="match status" value="1"/>
</dbReference>
<dbReference type="PIRSF" id="PIRSF002419">
    <property type="entry name" value="Tetraspanin"/>
    <property type="match status" value="1"/>
</dbReference>
<dbReference type="PRINTS" id="PR00259">
    <property type="entry name" value="TMFOUR"/>
</dbReference>
<dbReference type="SUPFAM" id="SSF48652">
    <property type="entry name" value="Tetraspanin"/>
    <property type="match status" value="1"/>
</dbReference>
<evidence type="ECO:0000250" key="1"/>
<evidence type="ECO:0000255" key="2"/>
<evidence type="ECO:0000269" key="3">
    <source>
    </source>
</evidence>
<evidence type="ECO:0000305" key="4"/>
<keyword id="KW-1015">Disulfide bond</keyword>
<keyword id="KW-0325">Glycoprotein</keyword>
<keyword id="KW-0472">Membrane</keyword>
<keyword id="KW-1185">Reference proteome</keyword>
<keyword id="KW-0812">Transmembrane</keyword>
<keyword id="KW-1133">Transmembrane helix</keyword>
<organism>
    <name type="scientific">Mus musculus</name>
    <name type="common">Mouse</name>
    <dbReference type="NCBI Taxonomy" id="10090"/>
    <lineage>
        <taxon>Eukaryota</taxon>
        <taxon>Metazoa</taxon>
        <taxon>Chordata</taxon>
        <taxon>Craniata</taxon>
        <taxon>Vertebrata</taxon>
        <taxon>Euteleostomi</taxon>
        <taxon>Mammalia</taxon>
        <taxon>Eutheria</taxon>
        <taxon>Euarchontoglires</taxon>
        <taxon>Glires</taxon>
        <taxon>Rodentia</taxon>
        <taxon>Myomorpha</taxon>
        <taxon>Muroidea</taxon>
        <taxon>Muridae</taxon>
        <taxon>Murinae</taxon>
        <taxon>Mus</taxon>
        <taxon>Mus</taxon>
    </lineage>
</organism>
<comment type="function">
    <text evidence="1">Component of the asymmetric unit membrane (AUM); a highly specialized biomembrane elaborated by terminally differentiated urothelial cells. May play an important role in normal bladder epithelial physiology, possibly in regulating membrane permeability of superficial umbrella cells or in stabilizing the apical membrane through AUM/cytoskeletal interactions (By similarity).</text>
</comment>
<comment type="subunit">
    <text evidence="1 3">Homodimer; disulfide-linked. Interacts with uroplakin-2 (UPK2) (By similarity). Binds to uropathogenic E.coli fimH.</text>
</comment>
<comment type="subcellular location">
    <subcellularLocation>
        <location>Membrane</location>
        <topology>Multi-pass membrane protein</topology>
    </subcellularLocation>
</comment>
<comment type="similarity">
    <text evidence="4">Belongs to the tetraspanin (TM4SF) family.</text>
</comment>
<accession>Q9D132</accession>
<gene>
    <name type="primary">Upk1a</name>
</gene>